<protein>
    <recommendedName>
        <fullName evidence="1">4-hydroxy-3-methylbut-2-enyl diphosphate reductase</fullName>
        <shortName evidence="1">HMBPP reductase</shortName>
        <ecNumber evidence="1">1.17.7.4</ecNumber>
    </recommendedName>
</protein>
<organism>
    <name type="scientific">Geobacillus thermodenitrificans (strain NG80-2)</name>
    <dbReference type="NCBI Taxonomy" id="420246"/>
    <lineage>
        <taxon>Bacteria</taxon>
        <taxon>Bacillati</taxon>
        <taxon>Bacillota</taxon>
        <taxon>Bacilli</taxon>
        <taxon>Bacillales</taxon>
        <taxon>Anoxybacillaceae</taxon>
        <taxon>Geobacillus</taxon>
    </lineage>
</organism>
<reference key="1">
    <citation type="journal article" date="2007" name="Proc. Natl. Acad. Sci. U.S.A.">
        <title>Genome and proteome of long-chain alkane degrading Geobacillus thermodenitrificans NG80-2 isolated from a deep-subsurface oil reservoir.</title>
        <authorList>
            <person name="Feng L."/>
            <person name="Wang W."/>
            <person name="Cheng J."/>
            <person name="Ren Y."/>
            <person name="Zhao G."/>
            <person name="Gao C."/>
            <person name="Tang Y."/>
            <person name="Liu X."/>
            <person name="Han W."/>
            <person name="Peng X."/>
            <person name="Liu R."/>
            <person name="Wang L."/>
        </authorList>
    </citation>
    <scope>NUCLEOTIDE SEQUENCE [LARGE SCALE GENOMIC DNA]</scope>
    <source>
        <strain>NG80-2</strain>
    </source>
</reference>
<proteinExistence type="inferred from homology"/>
<evidence type="ECO:0000255" key="1">
    <source>
        <dbReference type="HAMAP-Rule" id="MF_00191"/>
    </source>
</evidence>
<name>ISPH_GEOTN</name>
<comment type="function">
    <text evidence="1">Catalyzes the conversion of 1-hydroxy-2-methyl-2-(E)-butenyl 4-diphosphate (HMBPP) into a mixture of isopentenyl diphosphate (IPP) and dimethylallyl diphosphate (DMAPP). Acts in the terminal step of the DOXP/MEP pathway for isoprenoid precursor biosynthesis.</text>
</comment>
<comment type="catalytic activity">
    <reaction evidence="1">
        <text>isopentenyl diphosphate + 2 oxidized [2Fe-2S]-[ferredoxin] + H2O = (2E)-4-hydroxy-3-methylbut-2-enyl diphosphate + 2 reduced [2Fe-2S]-[ferredoxin] + 2 H(+)</text>
        <dbReference type="Rhea" id="RHEA:24488"/>
        <dbReference type="Rhea" id="RHEA-COMP:10000"/>
        <dbReference type="Rhea" id="RHEA-COMP:10001"/>
        <dbReference type="ChEBI" id="CHEBI:15377"/>
        <dbReference type="ChEBI" id="CHEBI:15378"/>
        <dbReference type="ChEBI" id="CHEBI:33737"/>
        <dbReference type="ChEBI" id="CHEBI:33738"/>
        <dbReference type="ChEBI" id="CHEBI:128753"/>
        <dbReference type="ChEBI" id="CHEBI:128769"/>
        <dbReference type="EC" id="1.17.7.4"/>
    </reaction>
</comment>
<comment type="catalytic activity">
    <reaction evidence="1">
        <text>dimethylallyl diphosphate + 2 oxidized [2Fe-2S]-[ferredoxin] + H2O = (2E)-4-hydroxy-3-methylbut-2-enyl diphosphate + 2 reduced [2Fe-2S]-[ferredoxin] + 2 H(+)</text>
        <dbReference type="Rhea" id="RHEA:24825"/>
        <dbReference type="Rhea" id="RHEA-COMP:10000"/>
        <dbReference type="Rhea" id="RHEA-COMP:10001"/>
        <dbReference type="ChEBI" id="CHEBI:15377"/>
        <dbReference type="ChEBI" id="CHEBI:15378"/>
        <dbReference type="ChEBI" id="CHEBI:33737"/>
        <dbReference type="ChEBI" id="CHEBI:33738"/>
        <dbReference type="ChEBI" id="CHEBI:57623"/>
        <dbReference type="ChEBI" id="CHEBI:128753"/>
        <dbReference type="EC" id="1.17.7.4"/>
    </reaction>
</comment>
<comment type="cofactor">
    <cofactor evidence="1">
        <name>[4Fe-4S] cluster</name>
        <dbReference type="ChEBI" id="CHEBI:49883"/>
    </cofactor>
    <text evidence="1">Binds 1 [4Fe-4S] cluster per subunit.</text>
</comment>
<comment type="pathway">
    <text evidence="1">Isoprenoid biosynthesis; dimethylallyl diphosphate biosynthesis; dimethylallyl diphosphate from (2E)-4-hydroxy-3-methylbutenyl diphosphate: step 1/1.</text>
</comment>
<comment type="pathway">
    <text evidence="1">Isoprenoid biosynthesis; isopentenyl diphosphate biosynthesis via DXP pathway; isopentenyl diphosphate from 1-deoxy-D-xylulose 5-phosphate: step 6/6.</text>
</comment>
<comment type="similarity">
    <text evidence="1">Belongs to the IspH family.</text>
</comment>
<sequence>MEVIKITPRGYCYGVVDAMVIARNAALDPSLPRPIYILGMIVHNKHVTDAFAEEGIITLDGENRLEILEKIERGTVIFTAHGVSPEVKKRALEKGLVTIDATCPDVTKTHRLIEQKLADGYDIIYIGKKGHPEPEGAVGINPERIHLVETPDDVERLSLKNERLMVTNQTTMSQWDVADIMAKVKEKYPHVEMHKEICLATQLRQEAVAEQAKEADVTIVVGDPRSNNSNRLAQVSEEIAGTKAYRIADVTEIDINWIKNAKKVAVTAGASTPTPITKEVIDFLEQFDPNDPATWERERKVPLQKILPKVKTKKEE</sequence>
<keyword id="KW-0004">4Fe-4S</keyword>
<keyword id="KW-0408">Iron</keyword>
<keyword id="KW-0411">Iron-sulfur</keyword>
<keyword id="KW-0414">Isoprene biosynthesis</keyword>
<keyword id="KW-0479">Metal-binding</keyword>
<keyword id="KW-0560">Oxidoreductase</keyword>
<accession>A4IR05</accession>
<feature type="chain" id="PRO_1000021127" description="4-hydroxy-3-methylbut-2-enyl diphosphate reductase">
    <location>
        <begin position="1"/>
        <end position="316"/>
    </location>
</feature>
<feature type="active site" description="Proton donor" evidence="1">
    <location>
        <position position="133"/>
    </location>
</feature>
<feature type="binding site" evidence="1">
    <location>
        <position position="12"/>
    </location>
    <ligand>
        <name>[4Fe-4S] cluster</name>
        <dbReference type="ChEBI" id="CHEBI:49883"/>
    </ligand>
</feature>
<feature type="binding site" evidence="1">
    <location>
        <position position="43"/>
    </location>
    <ligand>
        <name>(2E)-4-hydroxy-3-methylbut-2-enyl diphosphate</name>
        <dbReference type="ChEBI" id="CHEBI:128753"/>
    </ligand>
</feature>
<feature type="binding site" evidence="1">
    <location>
        <position position="43"/>
    </location>
    <ligand>
        <name>dimethylallyl diphosphate</name>
        <dbReference type="ChEBI" id="CHEBI:57623"/>
    </ligand>
</feature>
<feature type="binding site" evidence="1">
    <location>
        <position position="43"/>
    </location>
    <ligand>
        <name>isopentenyl diphosphate</name>
        <dbReference type="ChEBI" id="CHEBI:128769"/>
    </ligand>
</feature>
<feature type="binding site" evidence="1">
    <location>
        <position position="81"/>
    </location>
    <ligand>
        <name>(2E)-4-hydroxy-3-methylbut-2-enyl diphosphate</name>
        <dbReference type="ChEBI" id="CHEBI:128753"/>
    </ligand>
</feature>
<feature type="binding site" evidence="1">
    <location>
        <position position="81"/>
    </location>
    <ligand>
        <name>dimethylallyl diphosphate</name>
        <dbReference type="ChEBI" id="CHEBI:57623"/>
    </ligand>
</feature>
<feature type="binding site" evidence="1">
    <location>
        <position position="81"/>
    </location>
    <ligand>
        <name>isopentenyl diphosphate</name>
        <dbReference type="ChEBI" id="CHEBI:128769"/>
    </ligand>
</feature>
<feature type="binding site" evidence="1">
    <location>
        <position position="103"/>
    </location>
    <ligand>
        <name>[4Fe-4S] cluster</name>
        <dbReference type="ChEBI" id="CHEBI:49883"/>
    </ligand>
</feature>
<feature type="binding site" evidence="1">
    <location>
        <position position="131"/>
    </location>
    <ligand>
        <name>(2E)-4-hydroxy-3-methylbut-2-enyl diphosphate</name>
        <dbReference type="ChEBI" id="CHEBI:128753"/>
    </ligand>
</feature>
<feature type="binding site" evidence="1">
    <location>
        <position position="131"/>
    </location>
    <ligand>
        <name>dimethylallyl diphosphate</name>
        <dbReference type="ChEBI" id="CHEBI:57623"/>
    </ligand>
</feature>
<feature type="binding site" evidence="1">
    <location>
        <position position="131"/>
    </location>
    <ligand>
        <name>isopentenyl diphosphate</name>
        <dbReference type="ChEBI" id="CHEBI:128769"/>
    </ligand>
</feature>
<feature type="binding site" evidence="1">
    <location>
        <position position="170"/>
    </location>
    <ligand>
        <name>(2E)-4-hydroxy-3-methylbut-2-enyl diphosphate</name>
        <dbReference type="ChEBI" id="CHEBI:128753"/>
    </ligand>
</feature>
<feature type="binding site" evidence="1">
    <location>
        <position position="198"/>
    </location>
    <ligand>
        <name>[4Fe-4S] cluster</name>
        <dbReference type="ChEBI" id="CHEBI:49883"/>
    </ligand>
</feature>
<feature type="binding site" evidence="1">
    <location>
        <position position="226"/>
    </location>
    <ligand>
        <name>(2E)-4-hydroxy-3-methylbut-2-enyl diphosphate</name>
        <dbReference type="ChEBI" id="CHEBI:128753"/>
    </ligand>
</feature>
<feature type="binding site" evidence="1">
    <location>
        <position position="226"/>
    </location>
    <ligand>
        <name>dimethylallyl diphosphate</name>
        <dbReference type="ChEBI" id="CHEBI:57623"/>
    </ligand>
</feature>
<feature type="binding site" evidence="1">
    <location>
        <position position="226"/>
    </location>
    <ligand>
        <name>isopentenyl diphosphate</name>
        <dbReference type="ChEBI" id="CHEBI:128769"/>
    </ligand>
</feature>
<feature type="binding site" evidence="1">
    <location>
        <position position="228"/>
    </location>
    <ligand>
        <name>(2E)-4-hydroxy-3-methylbut-2-enyl diphosphate</name>
        <dbReference type="ChEBI" id="CHEBI:128753"/>
    </ligand>
</feature>
<feature type="binding site" evidence="1">
    <location>
        <position position="228"/>
    </location>
    <ligand>
        <name>dimethylallyl diphosphate</name>
        <dbReference type="ChEBI" id="CHEBI:57623"/>
    </ligand>
</feature>
<feature type="binding site" evidence="1">
    <location>
        <position position="228"/>
    </location>
    <ligand>
        <name>isopentenyl diphosphate</name>
        <dbReference type="ChEBI" id="CHEBI:128769"/>
    </ligand>
</feature>
<feature type="binding site" evidence="1">
    <location>
        <position position="271"/>
    </location>
    <ligand>
        <name>(2E)-4-hydroxy-3-methylbut-2-enyl diphosphate</name>
        <dbReference type="ChEBI" id="CHEBI:128753"/>
    </ligand>
</feature>
<feature type="binding site" evidence="1">
    <location>
        <position position="271"/>
    </location>
    <ligand>
        <name>dimethylallyl diphosphate</name>
        <dbReference type="ChEBI" id="CHEBI:57623"/>
    </ligand>
</feature>
<feature type="binding site" evidence="1">
    <location>
        <position position="271"/>
    </location>
    <ligand>
        <name>isopentenyl diphosphate</name>
        <dbReference type="ChEBI" id="CHEBI:128769"/>
    </ligand>
</feature>
<gene>
    <name evidence="1" type="primary">ispH</name>
    <name type="ordered locus">GTNG_2414</name>
</gene>
<dbReference type="EC" id="1.17.7.4" evidence="1"/>
<dbReference type="EMBL" id="CP000557">
    <property type="protein sequence ID" value="ABO67759.1"/>
    <property type="molecule type" value="Genomic_DNA"/>
</dbReference>
<dbReference type="RefSeq" id="WP_008879892.1">
    <property type="nucleotide sequence ID" value="NC_009328.1"/>
</dbReference>
<dbReference type="SMR" id="A4IR05"/>
<dbReference type="KEGG" id="gtn:GTNG_2414"/>
<dbReference type="eggNOG" id="COG0761">
    <property type="taxonomic scope" value="Bacteria"/>
</dbReference>
<dbReference type="HOGENOM" id="CLU_027486_0_0_9"/>
<dbReference type="UniPathway" id="UPA00056">
    <property type="reaction ID" value="UER00097"/>
</dbReference>
<dbReference type="UniPathway" id="UPA00059">
    <property type="reaction ID" value="UER00105"/>
</dbReference>
<dbReference type="Proteomes" id="UP000001578">
    <property type="component" value="Chromosome"/>
</dbReference>
<dbReference type="GO" id="GO:0051539">
    <property type="term" value="F:4 iron, 4 sulfur cluster binding"/>
    <property type="evidence" value="ECO:0007669"/>
    <property type="project" value="UniProtKB-UniRule"/>
</dbReference>
<dbReference type="GO" id="GO:0051745">
    <property type="term" value="F:4-hydroxy-3-methylbut-2-enyl diphosphate reductase activity"/>
    <property type="evidence" value="ECO:0007669"/>
    <property type="project" value="UniProtKB-UniRule"/>
</dbReference>
<dbReference type="GO" id="GO:0046872">
    <property type="term" value="F:metal ion binding"/>
    <property type="evidence" value="ECO:0007669"/>
    <property type="project" value="UniProtKB-KW"/>
</dbReference>
<dbReference type="GO" id="GO:0050992">
    <property type="term" value="P:dimethylallyl diphosphate biosynthetic process"/>
    <property type="evidence" value="ECO:0007669"/>
    <property type="project" value="UniProtKB-UniRule"/>
</dbReference>
<dbReference type="GO" id="GO:0019288">
    <property type="term" value="P:isopentenyl diphosphate biosynthetic process, methylerythritol 4-phosphate pathway"/>
    <property type="evidence" value="ECO:0007669"/>
    <property type="project" value="UniProtKB-UniRule"/>
</dbReference>
<dbReference type="GO" id="GO:0016114">
    <property type="term" value="P:terpenoid biosynthetic process"/>
    <property type="evidence" value="ECO:0007669"/>
    <property type="project" value="UniProtKB-UniRule"/>
</dbReference>
<dbReference type="CDD" id="cd13944">
    <property type="entry name" value="lytB_ispH"/>
    <property type="match status" value="1"/>
</dbReference>
<dbReference type="Gene3D" id="3.40.50.11270">
    <property type="match status" value="1"/>
</dbReference>
<dbReference type="Gene3D" id="3.40.1010.20">
    <property type="entry name" value="4-hydroxy-3-methylbut-2-enyl diphosphate reductase, catalytic domain"/>
    <property type="match status" value="2"/>
</dbReference>
<dbReference type="HAMAP" id="MF_00191">
    <property type="entry name" value="IspH"/>
    <property type="match status" value="1"/>
</dbReference>
<dbReference type="InterPro" id="IPR003451">
    <property type="entry name" value="LytB/IspH"/>
</dbReference>
<dbReference type="NCBIfam" id="TIGR00216">
    <property type="entry name" value="ispH_lytB"/>
    <property type="match status" value="1"/>
</dbReference>
<dbReference type="NCBIfam" id="NF002187">
    <property type="entry name" value="PRK01045.1-1"/>
    <property type="match status" value="1"/>
</dbReference>
<dbReference type="PANTHER" id="PTHR30426">
    <property type="entry name" value="4-HYDROXY-3-METHYLBUT-2-ENYL DIPHOSPHATE REDUCTASE"/>
    <property type="match status" value="1"/>
</dbReference>
<dbReference type="PANTHER" id="PTHR30426:SF0">
    <property type="entry name" value="4-HYDROXY-3-METHYLBUT-2-ENYL DIPHOSPHATE REDUCTASE"/>
    <property type="match status" value="1"/>
</dbReference>
<dbReference type="Pfam" id="PF02401">
    <property type="entry name" value="LYTB"/>
    <property type="match status" value="1"/>
</dbReference>